<proteinExistence type="inferred from homology"/>
<protein>
    <recommendedName>
        <fullName evidence="1">Adenylosuccinate synthetase</fullName>
        <shortName evidence="1">AMPSase</shortName>
        <shortName evidence="1">AdSS</shortName>
        <ecNumber evidence="1">6.3.4.4</ecNumber>
    </recommendedName>
    <alternativeName>
        <fullName evidence="1">IMP--aspartate ligase</fullName>
    </alternativeName>
</protein>
<gene>
    <name evidence="1" type="primary">purA</name>
    <name type="ordered locus">Hhal_0660</name>
</gene>
<name>PURA_HALHL</name>
<feature type="chain" id="PRO_1000000835" description="Adenylosuccinate synthetase">
    <location>
        <begin position="1"/>
        <end position="431"/>
    </location>
</feature>
<feature type="active site" description="Proton acceptor" evidence="1">
    <location>
        <position position="14"/>
    </location>
</feature>
<feature type="active site" description="Proton donor" evidence="1">
    <location>
        <position position="42"/>
    </location>
</feature>
<feature type="binding site" evidence="1">
    <location>
        <begin position="13"/>
        <end position="19"/>
    </location>
    <ligand>
        <name>GTP</name>
        <dbReference type="ChEBI" id="CHEBI:37565"/>
    </ligand>
</feature>
<feature type="binding site" description="in other chain" evidence="1">
    <location>
        <begin position="14"/>
        <end position="17"/>
    </location>
    <ligand>
        <name>IMP</name>
        <dbReference type="ChEBI" id="CHEBI:58053"/>
        <note>ligand shared between dimeric partners</note>
    </ligand>
</feature>
<feature type="binding site" evidence="1">
    <location>
        <position position="14"/>
    </location>
    <ligand>
        <name>Mg(2+)</name>
        <dbReference type="ChEBI" id="CHEBI:18420"/>
    </ligand>
</feature>
<feature type="binding site" description="in other chain" evidence="1">
    <location>
        <begin position="39"/>
        <end position="42"/>
    </location>
    <ligand>
        <name>IMP</name>
        <dbReference type="ChEBI" id="CHEBI:58053"/>
        <note>ligand shared between dimeric partners</note>
    </ligand>
</feature>
<feature type="binding site" evidence="1">
    <location>
        <begin position="41"/>
        <end position="43"/>
    </location>
    <ligand>
        <name>GTP</name>
        <dbReference type="ChEBI" id="CHEBI:37565"/>
    </ligand>
</feature>
<feature type="binding site" evidence="1">
    <location>
        <position position="41"/>
    </location>
    <ligand>
        <name>Mg(2+)</name>
        <dbReference type="ChEBI" id="CHEBI:18420"/>
    </ligand>
</feature>
<feature type="binding site" description="in other chain" evidence="1">
    <location>
        <position position="130"/>
    </location>
    <ligand>
        <name>IMP</name>
        <dbReference type="ChEBI" id="CHEBI:58053"/>
        <note>ligand shared between dimeric partners</note>
    </ligand>
</feature>
<feature type="binding site" evidence="1">
    <location>
        <position position="144"/>
    </location>
    <ligand>
        <name>IMP</name>
        <dbReference type="ChEBI" id="CHEBI:58053"/>
        <note>ligand shared between dimeric partners</note>
    </ligand>
</feature>
<feature type="binding site" description="in other chain" evidence="1">
    <location>
        <position position="225"/>
    </location>
    <ligand>
        <name>IMP</name>
        <dbReference type="ChEBI" id="CHEBI:58053"/>
        <note>ligand shared between dimeric partners</note>
    </ligand>
</feature>
<feature type="binding site" description="in other chain" evidence="1">
    <location>
        <position position="240"/>
    </location>
    <ligand>
        <name>IMP</name>
        <dbReference type="ChEBI" id="CHEBI:58053"/>
        <note>ligand shared between dimeric partners</note>
    </ligand>
</feature>
<feature type="binding site" evidence="1">
    <location>
        <begin position="302"/>
        <end position="308"/>
    </location>
    <ligand>
        <name>substrate</name>
    </ligand>
</feature>
<feature type="binding site" description="in other chain" evidence="1">
    <location>
        <position position="306"/>
    </location>
    <ligand>
        <name>IMP</name>
        <dbReference type="ChEBI" id="CHEBI:58053"/>
        <note>ligand shared between dimeric partners</note>
    </ligand>
</feature>
<feature type="binding site" evidence="1">
    <location>
        <position position="308"/>
    </location>
    <ligand>
        <name>GTP</name>
        <dbReference type="ChEBI" id="CHEBI:37565"/>
    </ligand>
</feature>
<feature type="binding site" evidence="1">
    <location>
        <begin position="334"/>
        <end position="336"/>
    </location>
    <ligand>
        <name>GTP</name>
        <dbReference type="ChEBI" id="CHEBI:37565"/>
    </ligand>
</feature>
<feature type="binding site" evidence="1">
    <location>
        <begin position="416"/>
        <end position="418"/>
    </location>
    <ligand>
        <name>GTP</name>
        <dbReference type="ChEBI" id="CHEBI:37565"/>
    </ligand>
</feature>
<evidence type="ECO:0000255" key="1">
    <source>
        <dbReference type="HAMAP-Rule" id="MF_00011"/>
    </source>
</evidence>
<accession>A1WUT0</accession>
<comment type="function">
    <text evidence="1">Plays an important role in the de novo pathway of purine nucleotide biosynthesis. Catalyzes the first committed step in the biosynthesis of AMP from IMP.</text>
</comment>
<comment type="catalytic activity">
    <reaction evidence="1">
        <text>IMP + L-aspartate + GTP = N(6)-(1,2-dicarboxyethyl)-AMP + GDP + phosphate + 2 H(+)</text>
        <dbReference type="Rhea" id="RHEA:15753"/>
        <dbReference type="ChEBI" id="CHEBI:15378"/>
        <dbReference type="ChEBI" id="CHEBI:29991"/>
        <dbReference type="ChEBI" id="CHEBI:37565"/>
        <dbReference type="ChEBI" id="CHEBI:43474"/>
        <dbReference type="ChEBI" id="CHEBI:57567"/>
        <dbReference type="ChEBI" id="CHEBI:58053"/>
        <dbReference type="ChEBI" id="CHEBI:58189"/>
        <dbReference type="EC" id="6.3.4.4"/>
    </reaction>
</comment>
<comment type="cofactor">
    <cofactor evidence="1">
        <name>Mg(2+)</name>
        <dbReference type="ChEBI" id="CHEBI:18420"/>
    </cofactor>
    <text evidence="1">Binds 1 Mg(2+) ion per subunit.</text>
</comment>
<comment type="pathway">
    <text evidence="1">Purine metabolism; AMP biosynthesis via de novo pathway; AMP from IMP: step 1/2.</text>
</comment>
<comment type="subunit">
    <text evidence="1">Homodimer.</text>
</comment>
<comment type="subcellular location">
    <subcellularLocation>
        <location evidence="1">Cytoplasm</location>
    </subcellularLocation>
</comment>
<comment type="similarity">
    <text evidence="1">Belongs to the adenylosuccinate synthetase family.</text>
</comment>
<keyword id="KW-0963">Cytoplasm</keyword>
<keyword id="KW-0342">GTP-binding</keyword>
<keyword id="KW-0436">Ligase</keyword>
<keyword id="KW-0460">Magnesium</keyword>
<keyword id="KW-0479">Metal-binding</keyword>
<keyword id="KW-0547">Nucleotide-binding</keyword>
<keyword id="KW-0658">Purine biosynthesis</keyword>
<keyword id="KW-1185">Reference proteome</keyword>
<dbReference type="EC" id="6.3.4.4" evidence="1"/>
<dbReference type="EMBL" id="CP000544">
    <property type="protein sequence ID" value="ABM61442.1"/>
    <property type="molecule type" value="Genomic_DNA"/>
</dbReference>
<dbReference type="RefSeq" id="WP_011813465.1">
    <property type="nucleotide sequence ID" value="NC_008789.1"/>
</dbReference>
<dbReference type="SMR" id="A1WUT0"/>
<dbReference type="STRING" id="349124.Hhal_0660"/>
<dbReference type="KEGG" id="hha:Hhal_0660"/>
<dbReference type="eggNOG" id="COG0104">
    <property type="taxonomic scope" value="Bacteria"/>
</dbReference>
<dbReference type="HOGENOM" id="CLU_029848_0_0_6"/>
<dbReference type="OrthoDB" id="9807553at2"/>
<dbReference type="UniPathway" id="UPA00075">
    <property type="reaction ID" value="UER00335"/>
</dbReference>
<dbReference type="Proteomes" id="UP000000647">
    <property type="component" value="Chromosome"/>
</dbReference>
<dbReference type="GO" id="GO:0005737">
    <property type="term" value="C:cytoplasm"/>
    <property type="evidence" value="ECO:0007669"/>
    <property type="project" value="UniProtKB-SubCell"/>
</dbReference>
<dbReference type="GO" id="GO:0004019">
    <property type="term" value="F:adenylosuccinate synthase activity"/>
    <property type="evidence" value="ECO:0007669"/>
    <property type="project" value="UniProtKB-UniRule"/>
</dbReference>
<dbReference type="GO" id="GO:0005525">
    <property type="term" value="F:GTP binding"/>
    <property type="evidence" value="ECO:0007669"/>
    <property type="project" value="UniProtKB-UniRule"/>
</dbReference>
<dbReference type="GO" id="GO:0000287">
    <property type="term" value="F:magnesium ion binding"/>
    <property type="evidence" value="ECO:0007669"/>
    <property type="project" value="UniProtKB-UniRule"/>
</dbReference>
<dbReference type="GO" id="GO:0044208">
    <property type="term" value="P:'de novo' AMP biosynthetic process"/>
    <property type="evidence" value="ECO:0007669"/>
    <property type="project" value="UniProtKB-UniRule"/>
</dbReference>
<dbReference type="GO" id="GO:0046040">
    <property type="term" value="P:IMP metabolic process"/>
    <property type="evidence" value="ECO:0007669"/>
    <property type="project" value="TreeGrafter"/>
</dbReference>
<dbReference type="CDD" id="cd03108">
    <property type="entry name" value="AdSS"/>
    <property type="match status" value="1"/>
</dbReference>
<dbReference type="FunFam" id="1.10.300.10:FF:000001">
    <property type="entry name" value="Adenylosuccinate synthetase"/>
    <property type="match status" value="1"/>
</dbReference>
<dbReference type="FunFam" id="3.90.170.10:FF:000001">
    <property type="entry name" value="Adenylosuccinate synthetase"/>
    <property type="match status" value="1"/>
</dbReference>
<dbReference type="Gene3D" id="3.40.440.10">
    <property type="entry name" value="Adenylosuccinate Synthetase, subunit A, domain 1"/>
    <property type="match status" value="1"/>
</dbReference>
<dbReference type="Gene3D" id="1.10.300.10">
    <property type="entry name" value="Adenylosuccinate Synthetase, subunit A, domain 2"/>
    <property type="match status" value="1"/>
</dbReference>
<dbReference type="Gene3D" id="3.90.170.10">
    <property type="entry name" value="Adenylosuccinate Synthetase, subunit A, domain 3"/>
    <property type="match status" value="1"/>
</dbReference>
<dbReference type="HAMAP" id="MF_00011">
    <property type="entry name" value="Adenylosucc_synth"/>
    <property type="match status" value="1"/>
</dbReference>
<dbReference type="InterPro" id="IPR018220">
    <property type="entry name" value="Adenylosuccin_syn_GTP-bd"/>
</dbReference>
<dbReference type="InterPro" id="IPR033128">
    <property type="entry name" value="Adenylosuccin_syn_Lys_AS"/>
</dbReference>
<dbReference type="InterPro" id="IPR042109">
    <property type="entry name" value="Adenylosuccinate_synth_dom1"/>
</dbReference>
<dbReference type="InterPro" id="IPR042110">
    <property type="entry name" value="Adenylosuccinate_synth_dom2"/>
</dbReference>
<dbReference type="InterPro" id="IPR042111">
    <property type="entry name" value="Adenylosuccinate_synth_dom3"/>
</dbReference>
<dbReference type="InterPro" id="IPR001114">
    <property type="entry name" value="Adenylosuccinate_synthetase"/>
</dbReference>
<dbReference type="InterPro" id="IPR027417">
    <property type="entry name" value="P-loop_NTPase"/>
</dbReference>
<dbReference type="NCBIfam" id="NF002223">
    <property type="entry name" value="PRK01117.1"/>
    <property type="match status" value="1"/>
</dbReference>
<dbReference type="NCBIfam" id="TIGR00184">
    <property type="entry name" value="purA"/>
    <property type="match status" value="1"/>
</dbReference>
<dbReference type="PANTHER" id="PTHR11846">
    <property type="entry name" value="ADENYLOSUCCINATE SYNTHETASE"/>
    <property type="match status" value="1"/>
</dbReference>
<dbReference type="PANTHER" id="PTHR11846:SF0">
    <property type="entry name" value="ADENYLOSUCCINATE SYNTHETASE"/>
    <property type="match status" value="1"/>
</dbReference>
<dbReference type="Pfam" id="PF00709">
    <property type="entry name" value="Adenylsucc_synt"/>
    <property type="match status" value="1"/>
</dbReference>
<dbReference type="SMART" id="SM00788">
    <property type="entry name" value="Adenylsucc_synt"/>
    <property type="match status" value="1"/>
</dbReference>
<dbReference type="SUPFAM" id="SSF52540">
    <property type="entry name" value="P-loop containing nucleoside triphosphate hydrolases"/>
    <property type="match status" value="1"/>
</dbReference>
<dbReference type="PROSITE" id="PS01266">
    <property type="entry name" value="ADENYLOSUCCIN_SYN_1"/>
    <property type="match status" value="1"/>
</dbReference>
<dbReference type="PROSITE" id="PS00513">
    <property type="entry name" value="ADENYLOSUCCIN_SYN_2"/>
    <property type="match status" value="1"/>
</dbReference>
<sequence length="431" mass="46750">MGTNVVVVGTQWGDEGKGKIVDWLTENAGVVARFQGGHNAGHTLVIDGEQTVLHLIPSGILREDATCVIGNGVVLSAEALLEEIRELEARGVPARERLRISPSCPLILPCHVALDHAREKAKGKAAIGTTGRGIGPAYEDKVARRGVRLSDLFHRERLAQKLGELLDYHNFVLKHYFGAPTMDFQEVLDQALAHGEELRPLTADVGALLTAEMRTGRNILFEGAQGTLLDIDHGTYPFVTSSNTCAGAAAAGTGVGPRTLDYILGITKAYTTRVGQGPFPTELDFDDEMGMHLGERGHEFGATTGRQRRCGWFDAVATRRAAQINSLSGLCITKLDVLDGLETLRLCVGYRCQGELCETLPSEVETLSECEPVYEDMPGWAESTSGIERYEDLPENARAYLGRIEELVGVPVAMISTGPDRNETIVRQSPF</sequence>
<organism>
    <name type="scientific">Halorhodospira halophila (strain DSM 244 / SL1)</name>
    <name type="common">Ectothiorhodospira halophila (strain DSM 244 / SL1)</name>
    <dbReference type="NCBI Taxonomy" id="349124"/>
    <lineage>
        <taxon>Bacteria</taxon>
        <taxon>Pseudomonadati</taxon>
        <taxon>Pseudomonadota</taxon>
        <taxon>Gammaproteobacteria</taxon>
        <taxon>Chromatiales</taxon>
        <taxon>Ectothiorhodospiraceae</taxon>
        <taxon>Halorhodospira</taxon>
    </lineage>
</organism>
<reference key="1">
    <citation type="submission" date="2006-12" db="EMBL/GenBank/DDBJ databases">
        <title>Complete sequence of Halorhodospira halophila SL1.</title>
        <authorList>
            <consortium name="US DOE Joint Genome Institute"/>
            <person name="Copeland A."/>
            <person name="Lucas S."/>
            <person name="Lapidus A."/>
            <person name="Barry K."/>
            <person name="Detter J.C."/>
            <person name="Glavina del Rio T."/>
            <person name="Hammon N."/>
            <person name="Israni S."/>
            <person name="Dalin E."/>
            <person name="Tice H."/>
            <person name="Pitluck S."/>
            <person name="Saunders E."/>
            <person name="Brettin T."/>
            <person name="Bruce D."/>
            <person name="Han C."/>
            <person name="Tapia R."/>
            <person name="Schmutz J."/>
            <person name="Larimer F."/>
            <person name="Land M."/>
            <person name="Hauser L."/>
            <person name="Kyrpides N."/>
            <person name="Mikhailova N."/>
            <person name="Hoff W."/>
            <person name="Richardson P."/>
        </authorList>
    </citation>
    <scope>NUCLEOTIDE SEQUENCE [LARGE SCALE GENOMIC DNA]</scope>
    <source>
        <strain>DSM 244 / SL1</strain>
    </source>
</reference>